<comment type="similarity">
    <text evidence="2">Belongs to the MgpC family.</text>
</comment>
<comment type="caution">
    <text evidence="2">Could be the product of a pseudogene.</text>
</comment>
<name>Y367_MYCPN</name>
<accession>P75414</accession>
<proteinExistence type="uncertain"/>
<gene>
    <name type="ordered locus">MPN_367</name>
    <name type="ORF">H91_orf322</name>
    <name type="ORF">MP469</name>
</gene>
<reference key="1">
    <citation type="journal article" date="1996" name="Nucleic Acids Res.">
        <title>Complete sequence analysis of the genome of the bacterium Mycoplasma pneumoniae.</title>
        <authorList>
            <person name="Himmelreich R."/>
            <person name="Hilbert H."/>
            <person name="Plagens H."/>
            <person name="Pirkl E."/>
            <person name="Li B.-C."/>
            <person name="Herrmann R."/>
        </authorList>
    </citation>
    <scope>NUCLEOTIDE SEQUENCE [LARGE SCALE GENOMIC DNA]</scope>
    <source>
        <strain>ATCC 29342 / M129 / Subtype 1</strain>
    </source>
</reference>
<evidence type="ECO:0000256" key="1">
    <source>
        <dbReference type="SAM" id="MobiDB-lite"/>
    </source>
</evidence>
<evidence type="ECO:0000305" key="2"/>
<dbReference type="EMBL" id="U00089">
    <property type="protein sequence ID" value="AAB96117.1"/>
    <property type="molecule type" value="Genomic_DNA"/>
</dbReference>
<dbReference type="PIR" id="S73795">
    <property type="entry name" value="S73795"/>
</dbReference>
<dbReference type="SMR" id="P75414"/>
<dbReference type="IntAct" id="P75414">
    <property type="interactions" value="2"/>
</dbReference>
<dbReference type="STRING" id="272634.MPN_367"/>
<dbReference type="EnsemblBacteria" id="AAB96117">
    <property type="protein sequence ID" value="AAB96117"/>
    <property type="gene ID" value="MPN_367"/>
</dbReference>
<dbReference type="KEGG" id="mpn:MPN_367"/>
<dbReference type="HOGENOM" id="CLU_053831_0_0_14"/>
<dbReference type="Proteomes" id="UP000000808">
    <property type="component" value="Chromosome"/>
</dbReference>
<dbReference type="InterPro" id="IPR007885">
    <property type="entry name" value="MgpC"/>
</dbReference>
<dbReference type="Pfam" id="PF05220">
    <property type="entry name" value="MgpC"/>
    <property type="match status" value="1"/>
</dbReference>
<protein>
    <recommendedName>
        <fullName>Putative MgpC-like protein MPN_367</fullName>
    </recommendedName>
</protein>
<organism>
    <name type="scientific">Mycoplasma pneumoniae (strain ATCC 29342 / M129 / Subtype 1)</name>
    <name type="common">Mycoplasmoides pneumoniae</name>
    <dbReference type="NCBI Taxonomy" id="272634"/>
    <lineage>
        <taxon>Bacteria</taxon>
        <taxon>Bacillati</taxon>
        <taxon>Mycoplasmatota</taxon>
        <taxon>Mycoplasmoidales</taxon>
        <taxon>Mycoplasmoidaceae</taxon>
        <taxon>Mycoplasmoides</taxon>
    </lineage>
</organism>
<feature type="chain" id="PRO_0000210723" description="Putative MgpC-like protein MPN_367">
    <location>
        <begin position="1"/>
        <end position="322"/>
    </location>
</feature>
<feature type="region of interest" description="Disordered" evidence="1">
    <location>
        <begin position="1"/>
        <end position="59"/>
    </location>
</feature>
<feature type="region of interest" description="Disordered" evidence="1">
    <location>
        <begin position="118"/>
        <end position="145"/>
    </location>
</feature>
<feature type="compositionally biased region" description="Low complexity" evidence="1">
    <location>
        <begin position="1"/>
        <end position="48"/>
    </location>
</feature>
<feature type="compositionally biased region" description="Polar residues" evidence="1">
    <location>
        <begin position="120"/>
        <end position="134"/>
    </location>
</feature>
<sequence>MVGSGAAGSASSLQGNGSNSSGLKSLLRSAPVSVPPSSTSNQTLSLSNPAPVGPQAVVSQPAGGATAAVSVNRTASDTATFSKYLNTAQALHQMGVIVPGLEKWGGNNGTGVVASRRDATSTNLPHAAGASQTGLGTGSPREPALTATSQRAVTVVAGPLRAGNSSETDALPNVITQLYHTSTAQLAYLNGQIVVMSSARVPSLWYWVVGEDQESGKATWWAKTELNWGTDKQKQFVENQLGFKDDSNSDSKNSNLKTQGLTQPAYLIAGLDVVADHLVFAAFKAGAVGYDMTTDSNASTYNQALVWSTTAGLDSDGGTRLW</sequence>
<keyword id="KW-1185">Reference proteome</keyword>